<gene>
    <name evidence="1" type="primary">rplV</name>
    <name type="ordered locus">WIGBR5480</name>
</gene>
<sequence>METVAHHRYAKSSSQKVRLVADLIRGCDASRAMEILNFSNKKAARLIKKILKSAISNAEHNEGENIENLKIKTIYVNPGPSIKRIMPRAKGRSDRILKRTSHITIVLSGKK</sequence>
<evidence type="ECO:0000255" key="1">
    <source>
        <dbReference type="HAMAP-Rule" id="MF_01331"/>
    </source>
</evidence>
<evidence type="ECO:0000305" key="2"/>
<keyword id="KW-1185">Reference proteome</keyword>
<keyword id="KW-0687">Ribonucleoprotein</keyword>
<keyword id="KW-0689">Ribosomal protein</keyword>
<keyword id="KW-0694">RNA-binding</keyword>
<keyword id="KW-0699">rRNA-binding</keyword>
<dbReference type="EMBL" id="BA000021">
    <property type="protein sequence ID" value="BAC24694.1"/>
    <property type="molecule type" value="Genomic_DNA"/>
</dbReference>
<dbReference type="SMR" id="Q8D207"/>
<dbReference type="STRING" id="36870.gene:10369057"/>
<dbReference type="KEGG" id="wbr:rplV"/>
<dbReference type="eggNOG" id="COG0091">
    <property type="taxonomic scope" value="Bacteria"/>
</dbReference>
<dbReference type="HOGENOM" id="CLU_083987_3_3_6"/>
<dbReference type="OrthoDB" id="9805969at2"/>
<dbReference type="Proteomes" id="UP000000562">
    <property type="component" value="Chromosome"/>
</dbReference>
<dbReference type="GO" id="GO:0022625">
    <property type="term" value="C:cytosolic large ribosomal subunit"/>
    <property type="evidence" value="ECO:0007669"/>
    <property type="project" value="TreeGrafter"/>
</dbReference>
<dbReference type="GO" id="GO:0019843">
    <property type="term" value="F:rRNA binding"/>
    <property type="evidence" value="ECO:0007669"/>
    <property type="project" value="UniProtKB-UniRule"/>
</dbReference>
<dbReference type="GO" id="GO:0003735">
    <property type="term" value="F:structural constituent of ribosome"/>
    <property type="evidence" value="ECO:0007669"/>
    <property type="project" value="InterPro"/>
</dbReference>
<dbReference type="GO" id="GO:0006412">
    <property type="term" value="P:translation"/>
    <property type="evidence" value="ECO:0007669"/>
    <property type="project" value="UniProtKB-UniRule"/>
</dbReference>
<dbReference type="CDD" id="cd00336">
    <property type="entry name" value="Ribosomal_L22"/>
    <property type="match status" value="1"/>
</dbReference>
<dbReference type="FunFam" id="3.90.470.10:FF:000001">
    <property type="entry name" value="50S ribosomal protein L22"/>
    <property type="match status" value="1"/>
</dbReference>
<dbReference type="Gene3D" id="3.90.470.10">
    <property type="entry name" value="Ribosomal protein L22/L17"/>
    <property type="match status" value="1"/>
</dbReference>
<dbReference type="HAMAP" id="MF_01331_B">
    <property type="entry name" value="Ribosomal_uL22_B"/>
    <property type="match status" value="1"/>
</dbReference>
<dbReference type="InterPro" id="IPR001063">
    <property type="entry name" value="Ribosomal_uL22"/>
</dbReference>
<dbReference type="InterPro" id="IPR005727">
    <property type="entry name" value="Ribosomal_uL22_bac/chlpt-type"/>
</dbReference>
<dbReference type="InterPro" id="IPR047867">
    <property type="entry name" value="Ribosomal_uL22_bac/org-type"/>
</dbReference>
<dbReference type="InterPro" id="IPR018260">
    <property type="entry name" value="Ribosomal_uL22_CS"/>
</dbReference>
<dbReference type="InterPro" id="IPR036394">
    <property type="entry name" value="Ribosomal_uL22_sf"/>
</dbReference>
<dbReference type="NCBIfam" id="TIGR01044">
    <property type="entry name" value="rplV_bact"/>
    <property type="match status" value="1"/>
</dbReference>
<dbReference type="PANTHER" id="PTHR13501">
    <property type="entry name" value="CHLOROPLAST 50S RIBOSOMAL PROTEIN L22-RELATED"/>
    <property type="match status" value="1"/>
</dbReference>
<dbReference type="PANTHER" id="PTHR13501:SF8">
    <property type="entry name" value="LARGE RIBOSOMAL SUBUNIT PROTEIN UL22M"/>
    <property type="match status" value="1"/>
</dbReference>
<dbReference type="Pfam" id="PF00237">
    <property type="entry name" value="Ribosomal_L22"/>
    <property type="match status" value="1"/>
</dbReference>
<dbReference type="SUPFAM" id="SSF54843">
    <property type="entry name" value="Ribosomal protein L22"/>
    <property type="match status" value="1"/>
</dbReference>
<dbReference type="PROSITE" id="PS00464">
    <property type="entry name" value="RIBOSOMAL_L22"/>
    <property type="match status" value="1"/>
</dbReference>
<proteinExistence type="inferred from homology"/>
<organism>
    <name type="scientific">Wigglesworthia glossinidia brevipalpis</name>
    <dbReference type="NCBI Taxonomy" id="36870"/>
    <lineage>
        <taxon>Bacteria</taxon>
        <taxon>Pseudomonadati</taxon>
        <taxon>Pseudomonadota</taxon>
        <taxon>Gammaproteobacteria</taxon>
        <taxon>Enterobacterales</taxon>
        <taxon>Erwiniaceae</taxon>
        <taxon>Wigglesworthia</taxon>
    </lineage>
</organism>
<reference key="1">
    <citation type="journal article" date="2002" name="Nat. Genet.">
        <title>Genome sequence of the endocellular obligate symbiont of tsetse flies, Wigglesworthia glossinidia.</title>
        <authorList>
            <person name="Akman L."/>
            <person name="Yamashita A."/>
            <person name="Watanabe H."/>
            <person name="Oshima K."/>
            <person name="Shiba T."/>
            <person name="Hattori M."/>
            <person name="Aksoy S."/>
        </authorList>
    </citation>
    <scope>NUCLEOTIDE SEQUENCE [LARGE SCALE GENOMIC DNA]</scope>
</reference>
<accession>Q8D207</accession>
<protein>
    <recommendedName>
        <fullName evidence="1">Large ribosomal subunit protein uL22</fullName>
    </recommendedName>
    <alternativeName>
        <fullName evidence="2">50S ribosomal protein L22</fullName>
    </alternativeName>
</protein>
<comment type="function">
    <text evidence="1">This protein binds specifically to 23S rRNA; its binding is stimulated by other ribosomal proteins, e.g. L4, L17, and L20. It is important during the early stages of 50S assembly. It makes multiple contacts with different domains of the 23S rRNA in the assembled 50S subunit and ribosome (By similarity).</text>
</comment>
<comment type="function">
    <text evidence="1">The globular domain of the protein is located near the polypeptide exit tunnel on the outside of the subunit, while an extended beta-hairpin is found that lines the wall of the exit tunnel in the center of the 70S ribosome.</text>
</comment>
<comment type="subunit">
    <text evidence="1">Part of the 50S ribosomal subunit.</text>
</comment>
<comment type="similarity">
    <text evidence="1">Belongs to the universal ribosomal protein uL22 family.</text>
</comment>
<feature type="chain" id="PRO_0000125262" description="Large ribosomal subunit protein uL22">
    <location>
        <begin position="1"/>
        <end position="111"/>
    </location>
</feature>
<name>RL22_WIGBR</name>